<dbReference type="EC" id="3.4.11.1" evidence="1"/>
<dbReference type="EC" id="3.4.11.10" evidence="1"/>
<dbReference type="EMBL" id="CP000384">
    <property type="protein sequence ID" value="ABG09417.1"/>
    <property type="molecule type" value="Genomic_DNA"/>
</dbReference>
<dbReference type="SMR" id="Q1B6R7"/>
<dbReference type="KEGG" id="mmc:Mmcs_3310"/>
<dbReference type="HOGENOM" id="CLU_013734_2_0_11"/>
<dbReference type="GO" id="GO:0005737">
    <property type="term" value="C:cytoplasm"/>
    <property type="evidence" value="ECO:0007669"/>
    <property type="project" value="UniProtKB-SubCell"/>
</dbReference>
<dbReference type="GO" id="GO:0030145">
    <property type="term" value="F:manganese ion binding"/>
    <property type="evidence" value="ECO:0007669"/>
    <property type="project" value="UniProtKB-UniRule"/>
</dbReference>
<dbReference type="GO" id="GO:0070006">
    <property type="term" value="F:metalloaminopeptidase activity"/>
    <property type="evidence" value="ECO:0007669"/>
    <property type="project" value="InterPro"/>
</dbReference>
<dbReference type="GO" id="GO:0006508">
    <property type="term" value="P:proteolysis"/>
    <property type="evidence" value="ECO:0007669"/>
    <property type="project" value="UniProtKB-KW"/>
</dbReference>
<dbReference type="CDD" id="cd00433">
    <property type="entry name" value="Peptidase_M17"/>
    <property type="match status" value="1"/>
</dbReference>
<dbReference type="Gene3D" id="3.40.220.10">
    <property type="entry name" value="Leucine Aminopeptidase, subunit E, domain 1"/>
    <property type="match status" value="1"/>
</dbReference>
<dbReference type="Gene3D" id="3.40.630.10">
    <property type="entry name" value="Zn peptidases"/>
    <property type="match status" value="1"/>
</dbReference>
<dbReference type="HAMAP" id="MF_00181">
    <property type="entry name" value="Cytosol_peptidase_M17"/>
    <property type="match status" value="1"/>
</dbReference>
<dbReference type="InterPro" id="IPR011356">
    <property type="entry name" value="Leucine_aapep/pepB"/>
</dbReference>
<dbReference type="InterPro" id="IPR043472">
    <property type="entry name" value="Macro_dom-like"/>
</dbReference>
<dbReference type="InterPro" id="IPR000819">
    <property type="entry name" value="Peptidase_M17_C"/>
</dbReference>
<dbReference type="InterPro" id="IPR023042">
    <property type="entry name" value="Peptidase_M17_leu_NH2_pept"/>
</dbReference>
<dbReference type="InterPro" id="IPR008283">
    <property type="entry name" value="Peptidase_M17_N"/>
</dbReference>
<dbReference type="NCBIfam" id="NF002073">
    <property type="entry name" value="PRK00913.1-2"/>
    <property type="match status" value="1"/>
</dbReference>
<dbReference type="PANTHER" id="PTHR11963:SF23">
    <property type="entry name" value="CYTOSOL AMINOPEPTIDASE"/>
    <property type="match status" value="1"/>
</dbReference>
<dbReference type="PANTHER" id="PTHR11963">
    <property type="entry name" value="LEUCINE AMINOPEPTIDASE-RELATED"/>
    <property type="match status" value="1"/>
</dbReference>
<dbReference type="Pfam" id="PF00883">
    <property type="entry name" value="Peptidase_M17"/>
    <property type="match status" value="1"/>
</dbReference>
<dbReference type="Pfam" id="PF02789">
    <property type="entry name" value="Peptidase_M17_N"/>
    <property type="match status" value="1"/>
</dbReference>
<dbReference type="PRINTS" id="PR00481">
    <property type="entry name" value="LAMNOPPTDASE"/>
</dbReference>
<dbReference type="SUPFAM" id="SSF52949">
    <property type="entry name" value="Macro domain-like"/>
    <property type="match status" value="1"/>
</dbReference>
<dbReference type="SUPFAM" id="SSF53187">
    <property type="entry name" value="Zn-dependent exopeptidases"/>
    <property type="match status" value="1"/>
</dbReference>
<dbReference type="PROSITE" id="PS00631">
    <property type="entry name" value="CYTOSOL_AP"/>
    <property type="match status" value="1"/>
</dbReference>
<evidence type="ECO:0000255" key="1">
    <source>
        <dbReference type="HAMAP-Rule" id="MF_00181"/>
    </source>
</evidence>
<organism>
    <name type="scientific">Mycobacterium sp. (strain MCS)</name>
    <dbReference type="NCBI Taxonomy" id="164756"/>
    <lineage>
        <taxon>Bacteria</taxon>
        <taxon>Bacillati</taxon>
        <taxon>Actinomycetota</taxon>
        <taxon>Actinomycetes</taxon>
        <taxon>Mycobacteriales</taxon>
        <taxon>Mycobacteriaceae</taxon>
        <taxon>Mycobacterium</taxon>
    </lineage>
</organism>
<sequence length="513" mass="53339">MSSDPGYQAPVVTVSSSIPRRGVGDSVLIVPVVTRDDAAAVLAAAPFLDKDAVREIEAALKSLGATGGEGQTHRLVVSALPVASVLTIGLGKERDEWPADTVRRVAGNAARSLDKVAAVLTTLSALDLEAAIEGLILGSYRFTEFRSAKTAPKDGGLRAITALSQESKSRARDAAQRATDIATAVATARDFVNTPPSHLYPDEFAKRAKALGEAAGLEVEILDDKALVKAGYGGIVGVGKGSSRPPRLVRLSHKGAVRTRTRGARPGGSKRVALVGKGITFDTGGISIKPAANMHHMTSDMGGAAAVIATVVLAAKQKLPIDVIATVPMAENMPSATAQRPGDVLTQYGGTTVEVLNTDAEGRLILADAIVRACEDNPDYLIETSTLTGAQTVALGSRTPGVMGSDAFRDRVATLSQQVGENAWAMPLPEELKDDLKSTVADLANVSGSRFAGMLVAGTYLREFVADGVEWAHIDVAAPAYNSGGPWGYTPKGGTGVPTRTMFAVLEEIAREG</sequence>
<reference key="1">
    <citation type="submission" date="2006-06" db="EMBL/GenBank/DDBJ databases">
        <title>Complete sequence of chromosome of Mycobacterium sp. MCS.</title>
        <authorList>
            <consortium name="US DOE Joint Genome Institute"/>
            <person name="Copeland A."/>
            <person name="Lucas S."/>
            <person name="Lapidus A."/>
            <person name="Barry K."/>
            <person name="Detter J.C."/>
            <person name="Glavina del Rio T."/>
            <person name="Hammon N."/>
            <person name="Israni S."/>
            <person name="Dalin E."/>
            <person name="Tice H."/>
            <person name="Pitluck S."/>
            <person name="Martinez M."/>
            <person name="Schmutz J."/>
            <person name="Larimer F."/>
            <person name="Land M."/>
            <person name="Hauser L."/>
            <person name="Kyrpides N."/>
            <person name="Kim E."/>
            <person name="Miller C.D."/>
            <person name="Hughes J.E."/>
            <person name="Anderson A.J."/>
            <person name="Sims R.C."/>
            <person name="Richardson P."/>
        </authorList>
    </citation>
    <scope>NUCLEOTIDE SEQUENCE [LARGE SCALE GENOMIC DNA]</scope>
    <source>
        <strain>MCS</strain>
    </source>
</reference>
<protein>
    <recommendedName>
        <fullName evidence="1">Probable cytosol aminopeptidase</fullName>
        <ecNumber evidence="1">3.4.11.1</ecNumber>
    </recommendedName>
    <alternativeName>
        <fullName evidence="1">Leucine aminopeptidase</fullName>
        <shortName evidence="1">LAP</shortName>
        <ecNumber evidence="1">3.4.11.10</ecNumber>
    </alternativeName>
    <alternativeName>
        <fullName evidence="1">Leucyl aminopeptidase</fullName>
    </alternativeName>
</protein>
<proteinExistence type="inferred from homology"/>
<keyword id="KW-0031">Aminopeptidase</keyword>
<keyword id="KW-0963">Cytoplasm</keyword>
<keyword id="KW-0378">Hydrolase</keyword>
<keyword id="KW-0464">Manganese</keyword>
<keyword id="KW-0479">Metal-binding</keyword>
<keyword id="KW-0645">Protease</keyword>
<gene>
    <name evidence="1" type="primary">pepA</name>
    <name type="ordered locus">Mmcs_3310</name>
</gene>
<name>AMPA_MYCSS</name>
<comment type="function">
    <text evidence="1">Presumably involved in the processing and regular turnover of intracellular proteins. Catalyzes the removal of unsubstituted N-terminal amino acids from various peptides.</text>
</comment>
<comment type="catalytic activity">
    <reaction evidence="1">
        <text>Release of an N-terminal amino acid, Xaa-|-Yaa-, in which Xaa is preferably Leu, but may be other amino acids including Pro although not Arg or Lys, and Yaa may be Pro. Amino acid amides and methyl esters are also readily hydrolyzed, but rates on arylamides are exceedingly low.</text>
        <dbReference type="EC" id="3.4.11.1"/>
    </reaction>
</comment>
<comment type="catalytic activity">
    <reaction evidence="1">
        <text>Release of an N-terminal amino acid, preferentially leucine, but not glutamic or aspartic acids.</text>
        <dbReference type="EC" id="3.4.11.10"/>
    </reaction>
</comment>
<comment type="cofactor">
    <cofactor evidence="1">
        <name>Mn(2+)</name>
        <dbReference type="ChEBI" id="CHEBI:29035"/>
    </cofactor>
    <text evidence="1">Binds 2 manganese ions per subunit.</text>
</comment>
<comment type="subcellular location">
    <subcellularLocation>
        <location evidence="1">Cytoplasm</location>
    </subcellularLocation>
</comment>
<comment type="similarity">
    <text evidence="1">Belongs to the peptidase M17 family.</text>
</comment>
<feature type="chain" id="PRO_1000019939" description="Probable cytosol aminopeptidase">
    <location>
        <begin position="1"/>
        <end position="513"/>
    </location>
</feature>
<feature type="active site" evidence="1">
    <location>
        <position position="289"/>
    </location>
</feature>
<feature type="active site" evidence="1">
    <location>
        <position position="363"/>
    </location>
</feature>
<feature type="binding site" evidence="1">
    <location>
        <position position="277"/>
    </location>
    <ligand>
        <name>Mn(2+)</name>
        <dbReference type="ChEBI" id="CHEBI:29035"/>
        <label>2</label>
    </ligand>
</feature>
<feature type="binding site" evidence="1">
    <location>
        <position position="282"/>
    </location>
    <ligand>
        <name>Mn(2+)</name>
        <dbReference type="ChEBI" id="CHEBI:29035"/>
        <label>1</label>
    </ligand>
</feature>
<feature type="binding site" evidence="1">
    <location>
        <position position="282"/>
    </location>
    <ligand>
        <name>Mn(2+)</name>
        <dbReference type="ChEBI" id="CHEBI:29035"/>
        <label>2</label>
    </ligand>
</feature>
<feature type="binding site" evidence="1">
    <location>
        <position position="300"/>
    </location>
    <ligand>
        <name>Mn(2+)</name>
        <dbReference type="ChEBI" id="CHEBI:29035"/>
        <label>2</label>
    </ligand>
</feature>
<feature type="binding site" evidence="1">
    <location>
        <position position="359"/>
    </location>
    <ligand>
        <name>Mn(2+)</name>
        <dbReference type="ChEBI" id="CHEBI:29035"/>
        <label>1</label>
    </ligand>
</feature>
<feature type="binding site" evidence="1">
    <location>
        <position position="361"/>
    </location>
    <ligand>
        <name>Mn(2+)</name>
        <dbReference type="ChEBI" id="CHEBI:29035"/>
        <label>1</label>
    </ligand>
</feature>
<feature type="binding site" evidence="1">
    <location>
        <position position="361"/>
    </location>
    <ligand>
        <name>Mn(2+)</name>
        <dbReference type="ChEBI" id="CHEBI:29035"/>
        <label>2</label>
    </ligand>
</feature>
<accession>Q1B6R7</accession>